<reference key="1">
    <citation type="journal article" date="2008" name="J. Bacteriol.">
        <title>The pangenome structure of Escherichia coli: comparative genomic analysis of E. coli commensal and pathogenic isolates.</title>
        <authorList>
            <person name="Rasko D.A."/>
            <person name="Rosovitz M.J."/>
            <person name="Myers G.S.A."/>
            <person name="Mongodin E.F."/>
            <person name="Fricke W.F."/>
            <person name="Gajer P."/>
            <person name="Crabtree J."/>
            <person name="Sebaihia M."/>
            <person name="Thomson N.R."/>
            <person name="Chaudhuri R."/>
            <person name="Henderson I.R."/>
            <person name="Sperandio V."/>
            <person name="Ravel J."/>
        </authorList>
    </citation>
    <scope>NUCLEOTIDE SEQUENCE [LARGE SCALE GENOMIC DNA]</scope>
    <source>
        <strain>E24377A / ETEC</strain>
    </source>
</reference>
<gene>
    <name evidence="1" type="primary">mntP</name>
    <name type="synonym">yebN</name>
    <name type="ordered locus">EcE24377A_2050</name>
</gene>
<accession>A7ZMU3</accession>
<protein>
    <recommendedName>
        <fullName evidence="1">Probable manganese efflux pump MntP</fullName>
    </recommendedName>
</protein>
<proteinExistence type="inferred from homology"/>
<feature type="chain" id="PRO_1000068634" description="Probable manganese efflux pump MntP">
    <location>
        <begin position="1"/>
        <end position="188"/>
    </location>
</feature>
<feature type="transmembrane region" description="Helical" evidence="1">
    <location>
        <begin position="3"/>
        <end position="23"/>
    </location>
</feature>
<feature type="transmembrane region" description="Helical" evidence="1">
    <location>
        <begin position="66"/>
        <end position="86"/>
    </location>
</feature>
<feature type="transmembrane region" description="Helical" evidence="1">
    <location>
        <begin position="106"/>
        <end position="128"/>
    </location>
</feature>
<feature type="transmembrane region" description="Helical" evidence="1">
    <location>
        <begin position="143"/>
        <end position="163"/>
    </location>
</feature>
<feature type="transmembrane region" description="Helical" evidence="1">
    <location>
        <begin position="168"/>
        <end position="188"/>
    </location>
</feature>
<comment type="function">
    <text evidence="1">Probably functions as a manganese efflux pump.</text>
</comment>
<comment type="subcellular location">
    <subcellularLocation>
        <location evidence="1">Cell inner membrane</location>
        <topology evidence="1">Multi-pass membrane protein</topology>
    </subcellularLocation>
</comment>
<comment type="similarity">
    <text evidence="1">Belongs to the MntP (TC 9.B.29) family.</text>
</comment>
<name>MNTP_ECO24</name>
<organism>
    <name type="scientific">Escherichia coli O139:H28 (strain E24377A / ETEC)</name>
    <dbReference type="NCBI Taxonomy" id="331111"/>
    <lineage>
        <taxon>Bacteria</taxon>
        <taxon>Pseudomonadati</taxon>
        <taxon>Pseudomonadota</taxon>
        <taxon>Gammaproteobacteria</taxon>
        <taxon>Enterobacterales</taxon>
        <taxon>Enterobacteriaceae</taxon>
        <taxon>Escherichia</taxon>
    </lineage>
</organism>
<sequence>MNITATVLLAFGMSMDAFAASIGKGATLHKPKFSEALRTGLIFGAVETLTPLIGWGMGMLASRFVLEWNHWIAFVLLIFLGGRMIIEGFRGADDEDEEPRRRHGFWLLVTTAIATSLDAMAVGVGLAFLQVNIIATALAIGCATLIMSTLGMMVGRFIGSIIGKKAEILGGLVLIGIGVQILWTHFHG</sequence>
<evidence type="ECO:0000255" key="1">
    <source>
        <dbReference type="HAMAP-Rule" id="MF_01521"/>
    </source>
</evidence>
<dbReference type="EMBL" id="CP000800">
    <property type="protein sequence ID" value="ABV20130.1"/>
    <property type="molecule type" value="Genomic_DNA"/>
</dbReference>
<dbReference type="RefSeq" id="WP_001296134.1">
    <property type="nucleotide sequence ID" value="NC_009801.1"/>
</dbReference>
<dbReference type="GeneID" id="93776070"/>
<dbReference type="KEGG" id="ecw:EcE24377A_2050"/>
<dbReference type="HOGENOM" id="CLU_096410_0_0_6"/>
<dbReference type="Proteomes" id="UP000001122">
    <property type="component" value="Chromosome"/>
</dbReference>
<dbReference type="GO" id="GO:0005886">
    <property type="term" value="C:plasma membrane"/>
    <property type="evidence" value="ECO:0007669"/>
    <property type="project" value="UniProtKB-SubCell"/>
</dbReference>
<dbReference type="GO" id="GO:0005384">
    <property type="term" value="F:manganese ion transmembrane transporter activity"/>
    <property type="evidence" value="ECO:0007669"/>
    <property type="project" value="UniProtKB-UniRule"/>
</dbReference>
<dbReference type="HAMAP" id="MF_01521">
    <property type="entry name" value="MntP_pump"/>
    <property type="match status" value="1"/>
</dbReference>
<dbReference type="InterPro" id="IPR003810">
    <property type="entry name" value="Mntp/YtaF"/>
</dbReference>
<dbReference type="InterPro" id="IPR022929">
    <property type="entry name" value="Put_MntP"/>
</dbReference>
<dbReference type="NCBIfam" id="NF008546">
    <property type="entry name" value="PRK11469.1"/>
    <property type="match status" value="1"/>
</dbReference>
<dbReference type="PANTHER" id="PTHR35529">
    <property type="entry name" value="MANGANESE EFFLUX PUMP MNTP-RELATED"/>
    <property type="match status" value="1"/>
</dbReference>
<dbReference type="PANTHER" id="PTHR35529:SF1">
    <property type="entry name" value="MANGANESE EFFLUX PUMP MNTP-RELATED"/>
    <property type="match status" value="1"/>
</dbReference>
<dbReference type="Pfam" id="PF02659">
    <property type="entry name" value="Mntp"/>
    <property type="match status" value="1"/>
</dbReference>
<keyword id="KW-0997">Cell inner membrane</keyword>
<keyword id="KW-1003">Cell membrane</keyword>
<keyword id="KW-0406">Ion transport</keyword>
<keyword id="KW-0464">Manganese</keyword>
<keyword id="KW-0472">Membrane</keyword>
<keyword id="KW-1185">Reference proteome</keyword>
<keyword id="KW-0812">Transmembrane</keyword>
<keyword id="KW-1133">Transmembrane helix</keyword>
<keyword id="KW-0813">Transport</keyword>